<keyword id="KW-0002">3D-structure</keyword>
<keyword id="KW-0143">Chaperone</keyword>
<keyword id="KW-0963">Cytoplasm</keyword>
<keyword id="KW-0225">Disease variant</keyword>
<keyword id="KW-0342">GTP-binding</keyword>
<keyword id="KW-0378">Hydrolase</keyword>
<keyword id="KW-0496">Mitochondrion</keyword>
<keyword id="KW-0547">Nucleotide-binding</keyword>
<keyword id="KW-1267">Proteomics identification</keyword>
<keyword id="KW-1185">Reference proteome</keyword>
<keyword id="KW-0809">Transit peptide</keyword>
<dbReference type="EC" id="3.6.-.-" evidence="6 7 9 10"/>
<dbReference type="EMBL" id="AF524846">
    <property type="protein sequence ID" value="AAN77287.1"/>
    <property type="molecule type" value="Genomic_DNA"/>
</dbReference>
<dbReference type="EMBL" id="AF524841">
    <property type="protein sequence ID" value="AAN77287.1"/>
    <property type="status" value="JOINED"/>
    <property type="molecule type" value="Genomic_DNA"/>
</dbReference>
<dbReference type="EMBL" id="AF524842">
    <property type="protein sequence ID" value="AAN77287.1"/>
    <property type="status" value="JOINED"/>
    <property type="molecule type" value="Genomic_DNA"/>
</dbReference>
<dbReference type="EMBL" id="AF524843">
    <property type="protein sequence ID" value="AAN77287.1"/>
    <property type="status" value="JOINED"/>
    <property type="molecule type" value="Genomic_DNA"/>
</dbReference>
<dbReference type="EMBL" id="AF524844">
    <property type="protein sequence ID" value="AAN77287.1"/>
    <property type="status" value="JOINED"/>
    <property type="molecule type" value="Genomic_DNA"/>
</dbReference>
<dbReference type="EMBL" id="AF524845">
    <property type="protein sequence ID" value="AAN77287.1"/>
    <property type="status" value="JOINED"/>
    <property type="molecule type" value="Genomic_DNA"/>
</dbReference>
<dbReference type="EMBL" id="AK126662">
    <property type="protein sequence ID" value="BAG54352.1"/>
    <property type="molecule type" value="mRNA"/>
</dbReference>
<dbReference type="EMBL" id="CH471056">
    <property type="protein sequence ID" value="EAX05036.1"/>
    <property type="molecule type" value="Genomic_DNA"/>
</dbReference>
<dbReference type="EMBL" id="BC101178">
    <property type="protein sequence ID" value="AAI01179.1"/>
    <property type="molecule type" value="mRNA"/>
</dbReference>
<dbReference type="EMBL" id="BC101179">
    <property type="protein sequence ID" value="AAI01180.1"/>
    <property type="molecule type" value="mRNA"/>
</dbReference>
<dbReference type="CCDS" id="CCDS3766.1"/>
<dbReference type="RefSeq" id="NP_001362573.1">
    <property type="nucleotide sequence ID" value="NM_001375644.1"/>
</dbReference>
<dbReference type="RefSeq" id="NP_758454.1">
    <property type="nucleotide sequence ID" value="NM_172250.3"/>
</dbReference>
<dbReference type="RefSeq" id="XP_011529986.1">
    <property type="nucleotide sequence ID" value="XM_011531684.4"/>
</dbReference>
<dbReference type="RefSeq" id="XP_011529987.1">
    <property type="nucleotide sequence ID" value="XM_011531685.2"/>
</dbReference>
<dbReference type="RefSeq" id="XP_054205076.1">
    <property type="nucleotide sequence ID" value="XM_054349101.1"/>
</dbReference>
<dbReference type="PDB" id="2WWW">
    <property type="method" value="X-ray"/>
    <property type="resolution" value="2.64 A"/>
    <property type="chains" value="A/B/C/D=72-418"/>
</dbReference>
<dbReference type="PDB" id="8GJU">
    <property type="method" value="X-ray"/>
    <property type="resolution" value="2.79 A"/>
    <property type="chains" value="A/B/D/F=72-418"/>
</dbReference>
<dbReference type="PDBsum" id="2WWW"/>
<dbReference type="PDBsum" id="8GJU"/>
<dbReference type="SMR" id="Q8IVH4"/>
<dbReference type="BioGRID" id="127933">
    <property type="interactions" value="6"/>
</dbReference>
<dbReference type="CORUM" id="Q8IVH4"/>
<dbReference type="FunCoup" id="Q8IVH4">
    <property type="interactions" value="425"/>
</dbReference>
<dbReference type="IntAct" id="Q8IVH4">
    <property type="interactions" value="4"/>
</dbReference>
<dbReference type="MINT" id="Q8IVH4"/>
<dbReference type="STRING" id="9606.ENSP00000497008"/>
<dbReference type="DrugBank" id="DB00115">
    <property type="generic name" value="Cyanocobalamin"/>
</dbReference>
<dbReference type="DrugBank" id="DB00200">
    <property type="generic name" value="Hydroxocobalamin"/>
</dbReference>
<dbReference type="DrugCentral" id="Q8IVH4"/>
<dbReference type="iPTMnet" id="Q8IVH4"/>
<dbReference type="PhosphoSitePlus" id="Q8IVH4"/>
<dbReference type="SwissPalm" id="Q8IVH4"/>
<dbReference type="BioMuta" id="MMAA"/>
<dbReference type="DMDM" id="38258173"/>
<dbReference type="jPOST" id="Q8IVH4"/>
<dbReference type="MassIVE" id="Q8IVH4"/>
<dbReference type="PaxDb" id="9606-ENSP00000281317"/>
<dbReference type="PeptideAtlas" id="Q8IVH4"/>
<dbReference type="ProteomicsDB" id="70708"/>
<dbReference type="Pumba" id="Q8IVH4"/>
<dbReference type="Antibodypedia" id="27481">
    <property type="antibodies" value="157 antibodies from 19 providers"/>
</dbReference>
<dbReference type="DNASU" id="166785"/>
<dbReference type="Ensembl" id="ENST00000541599.5">
    <property type="protein sequence ID" value="ENSP00000442284.3"/>
    <property type="gene ID" value="ENSG00000151611.17"/>
</dbReference>
<dbReference type="Ensembl" id="ENST00000648388.1">
    <property type="protein sequence ID" value="ENSP00000497046.1"/>
    <property type="gene ID" value="ENSG00000151611.17"/>
</dbReference>
<dbReference type="Ensembl" id="ENST00000649156.2">
    <property type="protein sequence ID" value="ENSP00000497008.1"/>
    <property type="gene ID" value="ENSG00000151611.17"/>
</dbReference>
<dbReference type="Ensembl" id="ENST00000649704.1">
    <property type="protein sequence ID" value="ENSP00000497680.1"/>
    <property type="gene ID" value="ENSG00000151611.17"/>
</dbReference>
<dbReference type="Ensembl" id="ENST00000679563.1">
    <property type="protein sequence ID" value="ENSP00000506503.1"/>
    <property type="gene ID" value="ENSG00000151611.17"/>
</dbReference>
<dbReference type="GeneID" id="166785"/>
<dbReference type="KEGG" id="hsa:166785"/>
<dbReference type="MANE-Select" id="ENST00000649156.2">
    <property type="protein sequence ID" value="ENSP00000497008.1"/>
    <property type="RefSeq nucleotide sequence ID" value="NM_172250.3"/>
    <property type="RefSeq protein sequence ID" value="NP_758454.1"/>
</dbReference>
<dbReference type="UCSC" id="uc003ikh.5">
    <property type="organism name" value="human"/>
</dbReference>
<dbReference type="AGR" id="HGNC:18871"/>
<dbReference type="CTD" id="166785"/>
<dbReference type="DisGeNET" id="166785"/>
<dbReference type="GeneCards" id="MMAA"/>
<dbReference type="GeneReviews" id="MMAA"/>
<dbReference type="HGNC" id="HGNC:18871">
    <property type="gene designation" value="MMAA"/>
</dbReference>
<dbReference type="HPA" id="ENSG00000151611">
    <property type="expression patterns" value="Tissue enhanced (liver)"/>
</dbReference>
<dbReference type="MalaCards" id="MMAA"/>
<dbReference type="MIM" id="251100">
    <property type="type" value="phenotype"/>
</dbReference>
<dbReference type="MIM" id="607481">
    <property type="type" value="gene"/>
</dbReference>
<dbReference type="neXtProt" id="NX_Q8IVH4"/>
<dbReference type="OpenTargets" id="ENSG00000151611"/>
<dbReference type="Orphanet" id="79310">
    <property type="disease" value="Vitamin B12-responsive methylmalonic acidemia type cblA"/>
</dbReference>
<dbReference type="PharmGKB" id="PA134912808"/>
<dbReference type="VEuPathDB" id="HostDB:ENSG00000151611"/>
<dbReference type="eggNOG" id="ENOG502QR2W">
    <property type="taxonomic scope" value="Eukaryota"/>
</dbReference>
<dbReference type="GeneTree" id="ENSGT00390000009908"/>
<dbReference type="HOGENOM" id="CLU_043725_2_2_1"/>
<dbReference type="InParanoid" id="Q8IVH4"/>
<dbReference type="OrthoDB" id="1476984at2759"/>
<dbReference type="PAN-GO" id="Q8IVH4">
    <property type="GO annotations" value="2 GO annotations based on evolutionary models"/>
</dbReference>
<dbReference type="PhylomeDB" id="Q8IVH4"/>
<dbReference type="TreeFam" id="TF313243"/>
<dbReference type="PathwayCommons" id="Q8IVH4"/>
<dbReference type="Reactome" id="R-HSA-3359475">
    <property type="pathway name" value="Defective MMAA causes MMA, cblA type"/>
</dbReference>
<dbReference type="Reactome" id="R-HSA-3359478">
    <property type="pathway name" value="Defective MUT causes MMAM"/>
</dbReference>
<dbReference type="Reactome" id="R-HSA-71032">
    <property type="pathway name" value="Propionyl-CoA catabolism"/>
</dbReference>
<dbReference type="Reactome" id="R-HSA-9759218">
    <property type="pathway name" value="Cobalamin (Cbl) metabolism"/>
</dbReference>
<dbReference type="SABIO-RK" id="Q8IVH4"/>
<dbReference type="SignaLink" id="Q8IVH4"/>
<dbReference type="BioGRID-ORCS" id="166785">
    <property type="hits" value="13 hits in 1151 CRISPR screens"/>
</dbReference>
<dbReference type="ChiTaRS" id="MMAA">
    <property type="organism name" value="human"/>
</dbReference>
<dbReference type="EvolutionaryTrace" id="Q8IVH4"/>
<dbReference type="GeneWiki" id="MMAA"/>
<dbReference type="GenomeRNAi" id="166785"/>
<dbReference type="Pharos" id="Q8IVH4">
    <property type="development level" value="Tbio"/>
</dbReference>
<dbReference type="PRO" id="PR:Q8IVH4"/>
<dbReference type="Proteomes" id="UP000005640">
    <property type="component" value="Chromosome 4"/>
</dbReference>
<dbReference type="RNAct" id="Q8IVH4">
    <property type="molecule type" value="protein"/>
</dbReference>
<dbReference type="Bgee" id="ENSG00000151611">
    <property type="expression patterns" value="Expressed in secondary oocyte and 178 other cell types or tissues"/>
</dbReference>
<dbReference type="ExpressionAtlas" id="Q8IVH4">
    <property type="expression patterns" value="baseline and differential"/>
</dbReference>
<dbReference type="GO" id="GO:0005737">
    <property type="term" value="C:cytoplasm"/>
    <property type="evidence" value="ECO:0000314"/>
    <property type="project" value="UniProtKB"/>
</dbReference>
<dbReference type="GO" id="GO:0005829">
    <property type="term" value="C:cytosol"/>
    <property type="evidence" value="ECO:0000314"/>
    <property type="project" value="HPA"/>
</dbReference>
<dbReference type="GO" id="GO:0005759">
    <property type="term" value="C:mitochondrial matrix"/>
    <property type="evidence" value="ECO:0000304"/>
    <property type="project" value="Reactome"/>
</dbReference>
<dbReference type="GO" id="GO:0005739">
    <property type="term" value="C:mitochondrion"/>
    <property type="evidence" value="ECO:0000314"/>
    <property type="project" value="UniProtKB"/>
</dbReference>
<dbReference type="GO" id="GO:0005525">
    <property type="term" value="F:GTP binding"/>
    <property type="evidence" value="ECO:0000314"/>
    <property type="project" value="UniProtKB"/>
</dbReference>
<dbReference type="GO" id="GO:0003924">
    <property type="term" value="F:GTPase activity"/>
    <property type="evidence" value="ECO:0000314"/>
    <property type="project" value="UniProtKB"/>
</dbReference>
<dbReference type="GO" id="GO:0042802">
    <property type="term" value="F:identical protein binding"/>
    <property type="evidence" value="ECO:0000314"/>
    <property type="project" value="UniProtKB"/>
</dbReference>
<dbReference type="GO" id="GO:0140104">
    <property type="term" value="F:molecular carrier activity"/>
    <property type="evidence" value="ECO:0000304"/>
    <property type="project" value="Reactome"/>
</dbReference>
<dbReference type="GO" id="GO:0042803">
    <property type="term" value="F:protein homodimerization activity"/>
    <property type="evidence" value="ECO:0000314"/>
    <property type="project" value="UniProtKB"/>
</dbReference>
<dbReference type="GO" id="GO:0009235">
    <property type="term" value="P:cobalamin metabolic process"/>
    <property type="evidence" value="ECO:0000314"/>
    <property type="project" value="MGI"/>
</dbReference>
<dbReference type="CDD" id="cd03114">
    <property type="entry name" value="MMAA-like"/>
    <property type="match status" value="1"/>
</dbReference>
<dbReference type="FunFam" id="1.10.287.130:FF:000067">
    <property type="entry name" value="Methylmalonic aciduria type A homolog, mitochondrial"/>
    <property type="match status" value="1"/>
</dbReference>
<dbReference type="FunFam" id="1.20.5.170:FF:000078">
    <property type="entry name" value="Methylmalonic aciduria type A homolog, mitochondrial"/>
    <property type="match status" value="1"/>
</dbReference>
<dbReference type="FunFam" id="3.40.50.300:FF:000647">
    <property type="entry name" value="Methylmalonic aciduria type A homolog, mitochondrial"/>
    <property type="match status" value="1"/>
</dbReference>
<dbReference type="Gene3D" id="1.10.287.130">
    <property type="match status" value="1"/>
</dbReference>
<dbReference type="Gene3D" id="1.20.5.170">
    <property type="match status" value="1"/>
</dbReference>
<dbReference type="Gene3D" id="3.40.50.300">
    <property type="entry name" value="P-loop containing nucleotide triphosphate hydrolases"/>
    <property type="match status" value="1"/>
</dbReference>
<dbReference type="InterPro" id="IPR005129">
    <property type="entry name" value="GTPase_ArgK"/>
</dbReference>
<dbReference type="InterPro" id="IPR027417">
    <property type="entry name" value="P-loop_NTPase"/>
</dbReference>
<dbReference type="NCBIfam" id="TIGR00750">
    <property type="entry name" value="lao"/>
    <property type="match status" value="1"/>
</dbReference>
<dbReference type="NCBIfam" id="NF006958">
    <property type="entry name" value="PRK09435.1"/>
    <property type="match status" value="1"/>
</dbReference>
<dbReference type="PANTHER" id="PTHR23408:SF3">
    <property type="entry name" value="METHYLMALONIC ACIDURIA TYPE A PROTEIN, MITOCHONDRIAL"/>
    <property type="match status" value="1"/>
</dbReference>
<dbReference type="PANTHER" id="PTHR23408">
    <property type="entry name" value="METHYLMALONYL-COA MUTASE"/>
    <property type="match status" value="1"/>
</dbReference>
<dbReference type="Pfam" id="PF03308">
    <property type="entry name" value="MeaB"/>
    <property type="match status" value="1"/>
</dbReference>
<dbReference type="SUPFAM" id="SSF52540">
    <property type="entry name" value="P-loop containing nucleoside triphosphate hydrolases"/>
    <property type="match status" value="1"/>
</dbReference>
<gene>
    <name evidence="12" type="primary">MMAA</name>
</gene>
<sequence length="418" mass="46538">MPMLLPHPHQHFLKGLLRAPFRCYHFIFHSSTHLGSGIPCAQPFNSLGLHCTKWMLLSDGLKRKLCVQTTLKDHTEGLSDKEQRFVDKLYTGLIQGQRACLAEAITLVESTHSRKKELAQVLLQKVLLYHREQEQSNKGKPLAFRVGLSGPPGAGKSTFIEYFGKMLTERGHKLSVLAVDPSSCTSGGSLLGDKTRMTELSRDMNAYIRPSPTRGTLGGVTRTTNEAILLCEGAGYDIILIETVGVGQSEFAVADMVDMFVLLLPPAGGDELQGIKRGIIEMADLVAVTKSDGDLIVPARRIQAEYVSALKLLRKRSQVWKPKVIRISARSGEGISEMWDKMKDFQDLMLASGELTAKRRKQQKVWMWNLIQESVLEHFRTHPTVREQIPLLEQKVLIGALSPGLAADFLLKAFKSRD</sequence>
<organism>
    <name type="scientific">Homo sapiens</name>
    <name type="common">Human</name>
    <dbReference type="NCBI Taxonomy" id="9606"/>
    <lineage>
        <taxon>Eukaryota</taxon>
        <taxon>Metazoa</taxon>
        <taxon>Chordata</taxon>
        <taxon>Craniata</taxon>
        <taxon>Vertebrata</taxon>
        <taxon>Euteleostomi</taxon>
        <taxon>Mammalia</taxon>
        <taxon>Eutheria</taxon>
        <taxon>Euarchontoglires</taxon>
        <taxon>Primates</taxon>
        <taxon>Haplorrhini</taxon>
        <taxon>Catarrhini</taxon>
        <taxon>Hominidae</taxon>
        <taxon>Homo</taxon>
    </lineage>
</organism>
<comment type="function">
    <text evidence="6 7 9 10">GTPase, binds and hydrolyzes GTP (PubMed:20876572, PubMed:21138732, PubMed:28497574, PubMed:28943303). Involved in intracellular vitamin B12 metabolism, mediates the transport of cobalamin (Cbl) into mitochondria for the final steps of adenosylcobalamin (AdoCbl) synthesis (PubMed:20876572, PubMed:28497574). Functions as a G-protein chaperone that assists AdoCbl cofactor delivery from MMAB to the methylmalonyl-CoA mutase (MMUT) (PubMed:20876572, PubMed:28497574). Plays a dual role as both a protectase and a reactivase for MMUT (PubMed:21138732, PubMed:28943303). Protects MMUT from progressive inactivation by oxidation by decreasing the rate of the formation of the oxidized inactive cofactor hydroxocobalamin (OH2Cbl) (PubMed:21138732, PubMed:28943303). Additionally acts a reactivase by promoting the replacement of OH2Cbl by the active cofactor AdoCbl, restoring the activity of MMUT in the presence and hydrolysis of GTP (PubMed:21138732, PubMed:28943303).</text>
</comment>
<comment type="catalytic activity">
    <reaction evidence="6 7 9 10">
        <text>GTP + H2O = GDP + phosphate + H(+)</text>
        <dbReference type="Rhea" id="RHEA:19669"/>
        <dbReference type="ChEBI" id="CHEBI:15377"/>
        <dbReference type="ChEBI" id="CHEBI:15378"/>
        <dbReference type="ChEBI" id="CHEBI:37565"/>
        <dbReference type="ChEBI" id="CHEBI:43474"/>
        <dbReference type="ChEBI" id="CHEBI:58189"/>
    </reaction>
</comment>
<comment type="activity regulation">
    <text evidence="6 9">GTPase activity is stimulated by MMUT.</text>
</comment>
<comment type="biophysicochemical properties">
    <kinetics>
        <KM evidence="9">42 uM for GTP</KM>
        <KM evidence="6">330 uM for GTP</KM>
        <KM evidence="6">74 uM for GTP (in presence of MMUT)</KM>
        <text evidence="6 9">kcat is 0.201 min(-1) for GTP hydrolysis (PubMed:28497574). kcat is 0.03 min(-1) for GTP hydrolysis (PubMed:20876572).</text>
    </kinetics>
</comment>
<comment type="subunit">
    <text evidence="6 7 9 10">Homodimer (PubMed:20876572). Interacts with MMUT (the apoenzyme form); the interaction is GTP dependent (PubMed:20876572, PubMed:21138732, PubMed:28497574, PubMed:28943303).</text>
</comment>
<comment type="interaction">
    <interactant intactId="EBI-10714945">
        <id>Q8IVH4</id>
    </interactant>
    <interactant intactId="EBI-10714945">
        <id>Q8IVH4</id>
        <label>MMAA</label>
    </interactant>
    <organismsDiffer>false</organismsDiffer>
    <experiments>2</experiments>
</comment>
<comment type="interaction">
    <interactant intactId="EBI-10714945">
        <id>Q8IVH4</id>
    </interactant>
    <interactant intactId="EBI-2690467">
        <id>P22033</id>
        <label>MMUT</label>
    </interactant>
    <organismsDiffer>false</organismsDiffer>
    <experiments>3</experiments>
</comment>
<comment type="subcellular location">
    <subcellularLocation>
        <location evidence="10 11">Mitochondrion</location>
    </subcellularLocation>
    <subcellularLocation>
        <location evidence="10">Cytoplasm</location>
    </subcellularLocation>
</comment>
<comment type="tissue specificity">
    <text>Widely expressed. Highest expression is observed in liver and skeletal muscle.</text>
</comment>
<comment type="disease" evidence="2 3 4 5 6 8 9">
    <disease id="DI-00747">
        <name>Methylmalonic aciduria, cblA type</name>
        <acronym>MACA</acronym>
        <description>An autosomal recessive disorder of methylmalonate and cobalamin metabolism due to defective synthesis of adenosylcobalamin.</description>
        <dbReference type="MIM" id="251100"/>
    </disease>
    <text>The disease is caused by variants affecting the gene represented in this entry.</text>
</comment>
<comment type="similarity">
    <text evidence="11">Belongs to the SIMIBI class G3E GTPase family. ArgK/MeaB subfamily.</text>
</comment>
<name>MMAA_HUMAN</name>
<evidence type="ECO:0000255" key="1"/>
<evidence type="ECO:0000269" key="2">
    <source>
    </source>
</evidence>
<evidence type="ECO:0000269" key="3">
    <source>
    </source>
</evidence>
<evidence type="ECO:0000269" key="4">
    <source>
    </source>
</evidence>
<evidence type="ECO:0000269" key="5">
    <source>
    </source>
</evidence>
<evidence type="ECO:0000269" key="6">
    <source>
    </source>
</evidence>
<evidence type="ECO:0000269" key="7">
    <source>
    </source>
</evidence>
<evidence type="ECO:0000269" key="8">
    <source>
    </source>
</evidence>
<evidence type="ECO:0000269" key="9">
    <source>
    </source>
</evidence>
<evidence type="ECO:0000269" key="10">
    <source>
    </source>
</evidence>
<evidence type="ECO:0000305" key="11"/>
<evidence type="ECO:0000312" key="12">
    <source>
        <dbReference type="HGNC" id="HGNC:18871"/>
    </source>
</evidence>
<evidence type="ECO:0007829" key="13">
    <source>
        <dbReference type="PDB" id="2WWW"/>
    </source>
</evidence>
<evidence type="ECO:0007829" key="14">
    <source>
        <dbReference type="PDB" id="8GJU"/>
    </source>
</evidence>
<feature type="transit peptide" description="Mitochondrion" evidence="1">
    <location>
        <begin position="1"/>
        <end position="65"/>
    </location>
</feature>
<feature type="chain" id="PRO_0000002285" description="Methylmalonic aciduria type A protein, mitochondrial">
    <location>
        <begin position="66"/>
        <end position="418"/>
    </location>
</feature>
<feature type="binding site" evidence="6">
    <location>
        <begin position="150"/>
        <end position="158"/>
    </location>
    <ligand>
        <name>GTP</name>
        <dbReference type="ChEBI" id="CHEBI:37565"/>
    </ligand>
</feature>
<feature type="binding site" evidence="6 9">
    <location>
        <position position="292"/>
    </location>
    <ligand>
        <name>GTP</name>
        <dbReference type="ChEBI" id="CHEBI:37565"/>
    </ligand>
</feature>
<feature type="binding site" evidence="6">
    <location>
        <begin position="328"/>
        <end position="330"/>
    </location>
    <ligand>
        <name>GTP</name>
        <dbReference type="ChEBI" id="CHEBI:37565"/>
    </ligand>
</feature>
<feature type="sequence variant" id="VAR_080004" description="In MACA." evidence="4 5">
    <location>
        <begin position="22"/>
        <end position="418"/>
    </location>
</feature>
<feature type="sequence variant" id="VAR_080005" description="In MACA." evidence="9">
    <location>
        <begin position="24"/>
        <end position="418"/>
    </location>
</feature>
<feature type="sequence variant" id="VAR_080006" description="In MACA." evidence="4">
    <location>
        <begin position="54"/>
        <end position="418"/>
    </location>
</feature>
<feature type="sequence variant" id="VAR_080007" description="In MACA." evidence="9">
    <location>
        <begin position="68"/>
        <end position="418"/>
    </location>
</feature>
<feature type="sequence variant" id="VAR_020835" description="In MACA; abolishes protein levels; decreases protein stability; dbSNP:rs864309726." evidence="4 9">
    <original>L</original>
    <variation>P</variation>
    <location>
        <position position="89"/>
    </location>
</feature>
<feature type="sequence variant" id="VAR_080008" description="In MACA." evidence="9">
    <location>
        <begin position="95"/>
        <end position="418"/>
    </location>
</feature>
<feature type="sequence variant" id="VAR_080009" description="In MACA; decreases protein levels; no effect on binding to GDP; decreases by 55% GTPase activity; abolishes interaction with MUT; impairs GTPase activity stimulation by MUT; highly reduces release of AdoCbl by MMAB." evidence="9">
    <original>R</original>
    <variation>G</variation>
    <location>
        <position position="98"/>
    </location>
</feature>
<feature type="sequence variant" id="VAR_080010" description="In MACA." evidence="9">
    <location>
        <begin position="100"/>
        <end position="104"/>
    </location>
</feature>
<feature type="sequence variant" id="VAR_080011" description="In MACA." evidence="5">
    <location>
        <begin position="120"/>
        <end position="418"/>
    </location>
</feature>
<feature type="sequence variant" id="VAR_080012" description="In MACA." evidence="4">
    <location>
        <begin position="129"/>
        <end position="418"/>
    </location>
</feature>
<feature type="sequence variant" id="VAR_080013" description="In MACA." evidence="5">
    <location>
        <begin position="133"/>
        <end position="418"/>
    </location>
</feature>
<feature type="sequence variant" id="VAR_080014" description="In MACA." evidence="4 5 9">
    <location>
        <begin position="145"/>
        <end position="418"/>
    </location>
</feature>
<feature type="sequence variant" id="VAR_020836" description="In MACA; highly decreases protein levels; decreases protein stability; dbSNP:rs200577967." evidence="4 9">
    <original>R</original>
    <variation>Q</variation>
    <location>
        <position position="145"/>
    </location>
</feature>
<feature type="sequence variant" id="VAR_080015" description="In MACA; highly decreases protein levels; decreases protein stability; no effect on binding to GDP; no effect on GTPase activity; abolishes interaction with MUT; impairs GTPase activity stimulation by MUT; highly reduces release of AdoCbl by MMAB." evidence="4 9">
    <original>G</original>
    <variation>E</variation>
    <location>
        <position position="147"/>
    </location>
</feature>
<feature type="sequence variant" id="VAR_080016" description="In MACA; decreases protein levels; no effect on binding to GDP; no effect on GTPase activity; abolishes interaction with MUT; impairs GTPase activity stimulation by MUT; highly reduces release of AdoCbl by MMAB; dbSNP:rs864309729." evidence="5 6 9">
    <original>G</original>
    <variation>R</variation>
    <location>
        <position position="188"/>
    </location>
</feature>
<feature type="sequence variant" id="VAR_080017" description="In MACA; no effect on protein levels; no effect on binding to GDP; no effect on GTPase activity; no effect on interaction with MUT; impairs GTPase activity stimulation by MUT; reduces release of AdoCbl by MMAB; dbSNP:rs1553958392." evidence="9">
    <original>G</original>
    <variation>D</variation>
    <location>
        <position position="192"/>
    </location>
</feature>
<feature type="sequence variant" id="VAR_080018" description="In MACA." evidence="9">
    <location>
        <begin position="196"/>
        <end position="418"/>
    </location>
</feature>
<feature type="sequence variant" id="VAR_080019" description="In MACA; uncertain significance; decreases protein levels; no effect on binding to GDP; no effect on GTPase activity; no effect on interaction with MUT; impairs GTPase activity stimulation by MUT; reduces release of AdoCbl by MMAB; dbSNP:rs144389160." evidence="9">
    <original>R</original>
    <variation>Q</variation>
    <location>
        <position position="196"/>
    </location>
</feature>
<feature type="sequence variant" id="VAR_017202" description="In MACA; decreases protein levels; no effect on binding to GDP; no effect on GTPase activity; abolishes interaction with MUT; impairs GTPase activity stimulation by MUT; highly reduces release of AdoCbl by MMAB; dbSNP:rs104893849." evidence="2 4 9">
    <original>Y</original>
    <variation>C</variation>
    <location>
        <position position="207"/>
    </location>
</feature>
<feature type="sequence variant" id="VAR_071919" description="In MACA; decreases protein levels; no effect on binding to GDP; no effect on GTPase activity; abolishes interaction with MUT; impairs GTPase activity stimulation by MUT; highly reduces release of AdoCbl by MMAB." evidence="8 9">
    <original>R</original>
    <variation>S</variation>
    <location>
        <position position="209"/>
    </location>
</feature>
<feature type="sequence variant" id="VAR_020837" description="In MACA; decreases protein levels; no effect on binding to GDP; no effect on GTPase activity; abolishes interaction with MUT; impairs GTPase activity stimulation by MUT; highly reduces release of AdoCbl by MMAB; dbSNP:rs864309730." evidence="4 9">
    <original>G</original>
    <variation>E</variation>
    <location>
        <position position="218"/>
    </location>
</feature>
<feature type="sequence variant" id="VAR_080020" description="In MACA; decreases protein levels; no effect on binding to GDP; no effect on GTPase activity; abolishes interaction with MUT; impairs GTPase activity stimulation by MUT; highly reduces release of AdoCbl by MMAB; dbSNP:rs150376474." evidence="9">
    <original>V</original>
    <variation>M</variation>
    <location>
        <position position="220"/>
    </location>
</feature>
<feature type="sequence variant" id="VAR_080021" description="In MACA; highly decreases protein levels; decreases protein stability." evidence="9">
    <original>I</original>
    <variation>F</variation>
    <location>
        <position position="241"/>
    </location>
</feature>
<feature type="sequence variant" id="VAR_080022" description="In MACA; no effect on protein levels; no effect on binding to GDP; no effect on GTPase activity; abolishes interaction with MUT; impairs GTPase activity stimulation by MUT; highly reduces release of AdoCbl by MMAB; dbSNP:rs1553958417." evidence="9">
    <original>T</original>
    <variation>N</variation>
    <location>
        <position position="243"/>
    </location>
</feature>
<feature type="sequence variant" id="VAR_080023" description="In MACA." evidence="4 9">
    <location>
        <begin position="248"/>
        <end position="418"/>
    </location>
</feature>
<feature type="sequence variant" id="VAR_071920" description="In MACA; decreases protein levels; no effect on binding to GDP; no effect on GTPase activity; no effect on interaction with MUT; impairs GTPase activity stimulation by MUT; reduces release of AdoCbl by MMAB." evidence="8 9">
    <original>E</original>
    <variation>K</variation>
    <location>
        <position position="250"/>
    </location>
</feature>
<feature type="sequence variant" id="VAR_080024" description="In MACA; highly decreases protein levels." evidence="9">
    <original>D</original>
    <variation>N</variation>
    <location>
        <position position="258"/>
    </location>
</feature>
<feature type="sequence variant" id="VAR_071921" description="In MACA." evidence="8">
    <original>G</original>
    <variation>D</variation>
    <location>
        <position position="274"/>
    </location>
</feature>
<feature type="sequence variant" id="VAR_071922" description="In MACA; decreases protein levels; no effect on binding to GDP; no effect on GTPase activity; no effect on interaction with MUT; impairs GTPase activity stimulation by MUT; slightly reduces release of AdoCbl by MMAB." evidence="8 9">
    <original>G</original>
    <variation>S</variation>
    <location>
        <position position="274"/>
    </location>
</feature>
<feature type="sequence variant" id="VAR_071923" description="In MACA; decreases protein levels; no effect on binding to GDP; no effect on GTPase activity; no effect on interaction with MUT; impairs GTPase activity stimulation by MUT; reduces release of AdoCbl by MMAB." evidence="8 9">
    <original>K</original>
    <variation>E</variation>
    <location>
        <position position="276"/>
    </location>
</feature>
<feature type="sequence variant" id="VAR_080025" description="In MACA; highly decreases protein levels; decreases protein stability; dbSNP:rs1553959024." evidence="9">
    <original>A</original>
    <variation>D</variation>
    <location>
        <position position="287"/>
    </location>
</feature>
<feature type="sequence variant" id="VAR_080026" description="In MACA; decreases protein levels; highly decreases binding to GDP; no effect on GTPase activity; abolishes interaction with MUT; impairs GTPase activity stimulation by MUT; highly reduces release of AdoCbl by MMAB; dbSNP:rs1553959025." evidence="9">
    <original>D</original>
    <variation>V</variation>
    <location>
        <position position="292"/>
    </location>
</feature>
<feature type="sequence variant" id="VAR_080027" description="In MACA." evidence="4">
    <location>
        <begin position="320"/>
        <end position="418"/>
    </location>
</feature>
<feature type="sequence variant" id="VAR_080028" description="In MACA." evidence="4 9">
    <location>
        <begin position="330"/>
        <end position="418"/>
    </location>
</feature>
<feature type="sequence variant" id="VAR_080029" description="In MACA." evidence="9">
    <location>
        <begin position="359"/>
        <end position="418"/>
    </location>
</feature>
<feature type="sequence variant" id="VAR_038804" description="In MACA; decreases protein levels; decreases protein stability; no effect on binding to GDP; no effect on GTPase activity; no effect on interaction with MUT; impairs GTPase activity stimulation by MUT; reduces release of AdoCbl by MMAB." evidence="3 9">
    <original>R</original>
    <variation>G</variation>
    <location>
        <position position="359"/>
    </location>
</feature>
<feature type="sequence variant" id="VAR_020838" description="In MACA; decreases protein levels; dbSNP:rs864309731." evidence="4 8 9">
    <original>R</original>
    <variation>Q</variation>
    <location>
        <position position="359"/>
    </location>
</feature>
<feature type="sequence variant" id="VAR_020423" description="In dbSNP:rs2270655." evidence="4">
    <original>Q</original>
    <variation>H</variation>
    <location>
        <position position="363"/>
    </location>
</feature>
<feature type="sequence variant" id="VAR_080030" description="In MACA; highly decreases protein levels; decreases protein stability." evidence="9">
    <original>G</original>
    <variation>V</variation>
    <location>
        <position position="399"/>
    </location>
</feature>
<feature type="mutagenesis site" description="Abolishes binding to GTP and GTPase activity; when associated with A-292." evidence="9">
    <original>K</original>
    <variation>A</variation>
    <location>
        <position position="290"/>
    </location>
</feature>
<feature type="mutagenesis site" description="Abolishes binding to GTP and GTPase activity; when associated with A-290." evidence="9">
    <original>D</original>
    <variation>A</variation>
    <location>
        <position position="292"/>
    </location>
</feature>
<feature type="helix" evidence="13">
    <location>
        <begin position="80"/>
        <end position="94"/>
    </location>
</feature>
<feature type="helix" evidence="13">
    <location>
        <begin position="98"/>
        <end position="109"/>
    </location>
</feature>
<feature type="helix" evidence="13">
    <location>
        <begin position="113"/>
        <end position="135"/>
    </location>
</feature>
<feature type="turn" evidence="13">
    <location>
        <begin position="136"/>
        <end position="139"/>
    </location>
</feature>
<feature type="strand" evidence="13">
    <location>
        <begin position="144"/>
        <end position="149"/>
    </location>
</feature>
<feature type="helix" evidence="13">
    <location>
        <begin position="156"/>
        <end position="169"/>
    </location>
</feature>
<feature type="strand" evidence="13">
    <location>
        <begin position="174"/>
        <end position="178"/>
    </location>
</feature>
<feature type="strand" evidence="14">
    <location>
        <begin position="184"/>
        <end position="187"/>
    </location>
</feature>
<feature type="strand" evidence="14">
    <location>
        <begin position="189"/>
        <end position="191"/>
    </location>
</feature>
<feature type="turn" evidence="14">
    <location>
        <begin position="194"/>
        <end position="196"/>
    </location>
</feature>
<feature type="turn" evidence="14">
    <location>
        <begin position="198"/>
        <end position="202"/>
    </location>
</feature>
<feature type="strand" evidence="13">
    <location>
        <begin position="206"/>
        <end position="209"/>
    </location>
</feature>
<feature type="strand" evidence="14">
    <location>
        <begin position="217"/>
        <end position="220"/>
    </location>
</feature>
<feature type="helix" evidence="13">
    <location>
        <begin position="224"/>
        <end position="233"/>
    </location>
</feature>
<feature type="strand" evidence="13">
    <location>
        <begin position="237"/>
        <end position="242"/>
    </location>
</feature>
<feature type="helix" evidence="13">
    <location>
        <begin position="250"/>
        <end position="254"/>
    </location>
</feature>
<feature type="strand" evidence="13">
    <location>
        <begin position="258"/>
        <end position="264"/>
    </location>
</feature>
<feature type="helix" evidence="14">
    <location>
        <begin position="280"/>
        <end position="282"/>
    </location>
</feature>
<feature type="strand" evidence="13">
    <location>
        <begin position="284"/>
        <end position="288"/>
    </location>
</feature>
<feature type="helix" evidence="13">
    <location>
        <begin position="293"/>
        <end position="295"/>
    </location>
</feature>
<feature type="helix" evidence="13">
    <location>
        <begin position="296"/>
        <end position="310"/>
    </location>
</feature>
<feature type="strand" evidence="14">
    <location>
        <begin position="316"/>
        <end position="319"/>
    </location>
</feature>
<feature type="strand" evidence="13">
    <location>
        <begin position="323"/>
        <end position="326"/>
    </location>
</feature>
<feature type="turn" evidence="13">
    <location>
        <begin position="329"/>
        <end position="331"/>
    </location>
</feature>
<feature type="helix" evidence="13">
    <location>
        <begin position="335"/>
        <end position="352"/>
    </location>
</feature>
<feature type="helix" evidence="13">
    <location>
        <begin position="354"/>
        <end position="381"/>
    </location>
</feature>
<feature type="helix" evidence="13">
    <location>
        <begin position="383"/>
        <end position="397"/>
    </location>
</feature>
<feature type="helix" evidence="13">
    <location>
        <begin position="403"/>
        <end position="415"/>
    </location>
</feature>
<reference key="1">
    <citation type="journal article" date="2002" name="Proc. Natl. Acad. Sci. U.S.A.">
        <title>Identification of the gene responsible for the cblA complementation group of vitamin B12-responsive methylmalonic acidemia based on analysis of prokaryotic gene arrangements.</title>
        <authorList>
            <person name="Dobson C.M."/>
            <person name="Wai T."/>
            <person name="Leclerc D."/>
            <person name="Wilson A."/>
            <person name="Wu X."/>
            <person name="Dore C."/>
            <person name="Hudson T."/>
            <person name="Rosenblatt D.S."/>
            <person name="Gravel R.A."/>
        </authorList>
    </citation>
    <scope>NUCLEOTIDE SEQUENCE [GENOMIC DNA]</scope>
    <scope>VARIANT MMAA CYS-207</scope>
</reference>
<reference key="2">
    <citation type="journal article" date="2004" name="Nat. Genet.">
        <title>Complete sequencing and characterization of 21,243 full-length human cDNAs.</title>
        <authorList>
            <person name="Ota T."/>
            <person name="Suzuki Y."/>
            <person name="Nishikawa T."/>
            <person name="Otsuki T."/>
            <person name="Sugiyama T."/>
            <person name="Irie R."/>
            <person name="Wakamatsu A."/>
            <person name="Hayashi K."/>
            <person name="Sato H."/>
            <person name="Nagai K."/>
            <person name="Kimura K."/>
            <person name="Makita H."/>
            <person name="Sekine M."/>
            <person name="Obayashi M."/>
            <person name="Nishi T."/>
            <person name="Shibahara T."/>
            <person name="Tanaka T."/>
            <person name="Ishii S."/>
            <person name="Yamamoto J."/>
            <person name="Saito K."/>
            <person name="Kawai Y."/>
            <person name="Isono Y."/>
            <person name="Nakamura Y."/>
            <person name="Nagahari K."/>
            <person name="Murakami K."/>
            <person name="Yasuda T."/>
            <person name="Iwayanagi T."/>
            <person name="Wagatsuma M."/>
            <person name="Shiratori A."/>
            <person name="Sudo H."/>
            <person name="Hosoiri T."/>
            <person name="Kaku Y."/>
            <person name="Kodaira H."/>
            <person name="Kondo H."/>
            <person name="Sugawara M."/>
            <person name="Takahashi M."/>
            <person name="Kanda K."/>
            <person name="Yokoi T."/>
            <person name="Furuya T."/>
            <person name="Kikkawa E."/>
            <person name="Omura Y."/>
            <person name="Abe K."/>
            <person name="Kamihara K."/>
            <person name="Katsuta N."/>
            <person name="Sato K."/>
            <person name="Tanikawa M."/>
            <person name="Yamazaki M."/>
            <person name="Ninomiya K."/>
            <person name="Ishibashi T."/>
            <person name="Yamashita H."/>
            <person name="Murakawa K."/>
            <person name="Fujimori K."/>
            <person name="Tanai H."/>
            <person name="Kimata M."/>
            <person name="Watanabe M."/>
            <person name="Hiraoka S."/>
            <person name="Chiba Y."/>
            <person name="Ishida S."/>
            <person name="Ono Y."/>
            <person name="Takiguchi S."/>
            <person name="Watanabe S."/>
            <person name="Yosida M."/>
            <person name="Hotuta T."/>
            <person name="Kusano J."/>
            <person name="Kanehori K."/>
            <person name="Takahashi-Fujii A."/>
            <person name="Hara H."/>
            <person name="Tanase T.-O."/>
            <person name="Nomura Y."/>
            <person name="Togiya S."/>
            <person name="Komai F."/>
            <person name="Hara R."/>
            <person name="Takeuchi K."/>
            <person name="Arita M."/>
            <person name="Imose N."/>
            <person name="Musashino K."/>
            <person name="Yuuki H."/>
            <person name="Oshima A."/>
            <person name="Sasaki N."/>
            <person name="Aotsuka S."/>
            <person name="Yoshikawa Y."/>
            <person name="Matsunawa H."/>
            <person name="Ichihara T."/>
            <person name="Shiohata N."/>
            <person name="Sano S."/>
            <person name="Moriya S."/>
            <person name="Momiyama H."/>
            <person name="Satoh N."/>
            <person name="Takami S."/>
            <person name="Terashima Y."/>
            <person name="Suzuki O."/>
            <person name="Nakagawa S."/>
            <person name="Senoh A."/>
            <person name="Mizoguchi H."/>
            <person name="Goto Y."/>
            <person name="Shimizu F."/>
            <person name="Wakebe H."/>
            <person name="Hishigaki H."/>
            <person name="Watanabe T."/>
            <person name="Sugiyama A."/>
            <person name="Takemoto M."/>
            <person name="Kawakami B."/>
            <person name="Yamazaki M."/>
            <person name="Watanabe K."/>
            <person name="Kumagai A."/>
            <person name="Itakura S."/>
            <person name="Fukuzumi Y."/>
            <person name="Fujimori Y."/>
            <person name="Komiyama M."/>
            <person name="Tashiro H."/>
            <person name="Tanigami A."/>
            <person name="Fujiwara T."/>
            <person name="Ono T."/>
            <person name="Yamada K."/>
            <person name="Fujii Y."/>
            <person name="Ozaki K."/>
            <person name="Hirao M."/>
            <person name="Ohmori Y."/>
            <person name="Kawabata A."/>
            <person name="Hikiji T."/>
            <person name="Kobatake N."/>
            <person name="Inagaki H."/>
            <person name="Ikema Y."/>
            <person name="Okamoto S."/>
            <person name="Okitani R."/>
            <person name="Kawakami T."/>
            <person name="Noguchi S."/>
            <person name="Itoh T."/>
            <person name="Shigeta K."/>
            <person name="Senba T."/>
            <person name="Matsumura K."/>
            <person name="Nakajima Y."/>
            <person name="Mizuno T."/>
            <person name="Morinaga M."/>
            <person name="Sasaki M."/>
            <person name="Togashi T."/>
            <person name="Oyama M."/>
            <person name="Hata H."/>
            <person name="Watanabe M."/>
            <person name="Komatsu T."/>
            <person name="Mizushima-Sugano J."/>
            <person name="Satoh T."/>
            <person name="Shirai Y."/>
            <person name="Takahashi Y."/>
            <person name="Nakagawa K."/>
            <person name="Okumura K."/>
            <person name="Nagase T."/>
            <person name="Nomura N."/>
            <person name="Kikuchi H."/>
            <person name="Masuho Y."/>
            <person name="Yamashita R."/>
            <person name="Nakai K."/>
            <person name="Yada T."/>
            <person name="Nakamura Y."/>
            <person name="Ohara O."/>
            <person name="Isogai T."/>
            <person name="Sugano S."/>
        </authorList>
    </citation>
    <scope>NUCLEOTIDE SEQUENCE [LARGE SCALE MRNA]</scope>
    <source>
        <tissue>Cerebellum</tissue>
    </source>
</reference>
<reference key="3">
    <citation type="submission" date="2005-09" db="EMBL/GenBank/DDBJ databases">
        <authorList>
            <person name="Mural R.J."/>
            <person name="Istrail S."/>
            <person name="Sutton G.G."/>
            <person name="Florea L."/>
            <person name="Halpern A.L."/>
            <person name="Mobarry C.M."/>
            <person name="Lippert R."/>
            <person name="Walenz B."/>
            <person name="Shatkay H."/>
            <person name="Dew I."/>
            <person name="Miller J.R."/>
            <person name="Flanigan M.J."/>
            <person name="Edwards N.J."/>
            <person name="Bolanos R."/>
            <person name="Fasulo D."/>
            <person name="Halldorsson B.V."/>
            <person name="Hannenhalli S."/>
            <person name="Turner R."/>
            <person name="Yooseph S."/>
            <person name="Lu F."/>
            <person name="Nusskern D.R."/>
            <person name="Shue B.C."/>
            <person name="Zheng X.H."/>
            <person name="Zhong F."/>
            <person name="Delcher A.L."/>
            <person name="Huson D.H."/>
            <person name="Kravitz S.A."/>
            <person name="Mouchard L."/>
            <person name="Reinert K."/>
            <person name="Remington K.A."/>
            <person name="Clark A.G."/>
            <person name="Waterman M.S."/>
            <person name="Eichler E.E."/>
            <person name="Adams M.D."/>
            <person name="Hunkapiller M.W."/>
            <person name="Myers E.W."/>
            <person name="Venter J.C."/>
        </authorList>
    </citation>
    <scope>NUCLEOTIDE SEQUENCE [LARGE SCALE GENOMIC DNA]</scope>
</reference>
<reference key="4">
    <citation type="journal article" date="2004" name="Genome Res.">
        <title>The status, quality, and expansion of the NIH full-length cDNA project: the Mammalian Gene Collection (MGC).</title>
        <authorList>
            <consortium name="The MGC Project Team"/>
        </authorList>
    </citation>
    <scope>NUCLEOTIDE SEQUENCE [LARGE SCALE MRNA]</scope>
</reference>
<reference key="5">
    <citation type="journal article" date="2011" name="Biochem. Biophys. Res. Commun.">
        <title>Protection and reactivation of human methylmalonyl-CoA mutase by MMAA protein.</title>
        <authorList>
            <person name="Takahashi-Iniguez T."/>
            <person name="Garcia-Arellano H."/>
            <person name="Trujillo-Roldan M.A."/>
            <person name="Flores M.E."/>
        </authorList>
    </citation>
    <scope>FUNCTION</scope>
    <scope>CATALYTIC ACTIVITY</scope>
    <scope>INTERACTION WITH MMUT</scope>
</reference>
<reference key="6">
    <citation type="journal article" date="2014" name="J. Proteomics">
        <title>An enzyme assisted RP-RPLC approach for in-depth analysis of human liver phosphoproteome.</title>
        <authorList>
            <person name="Bian Y."/>
            <person name="Song C."/>
            <person name="Cheng K."/>
            <person name="Dong M."/>
            <person name="Wang F."/>
            <person name="Huang J."/>
            <person name="Sun D."/>
            <person name="Wang L."/>
            <person name="Ye M."/>
            <person name="Zou H."/>
        </authorList>
    </citation>
    <scope>IDENTIFICATION BY MASS SPECTROMETRY [LARGE SCALE ANALYSIS]</scope>
    <source>
        <tissue>Liver</tissue>
    </source>
</reference>
<reference key="7">
    <citation type="journal article" date="2015" name="Proteomics">
        <title>N-terminome analysis of the human mitochondrial proteome.</title>
        <authorList>
            <person name="Vaca Jacome A.S."/>
            <person name="Rabilloud T."/>
            <person name="Schaeffer-Reiss C."/>
            <person name="Rompais M."/>
            <person name="Ayoub D."/>
            <person name="Lane L."/>
            <person name="Bairoch A."/>
            <person name="Van Dorsselaer A."/>
            <person name="Carapito C."/>
        </authorList>
    </citation>
    <scope>IDENTIFICATION BY MASS SPECTROMETRY [LARGE SCALE ANALYSIS]</scope>
</reference>
<reference key="8">
    <citation type="journal article" date="2017" name="Biochimie">
        <title>Human MMAA induces the release of inactive cofactor and restores methylmalonyl-CoA mutase activity through their complex formation.</title>
        <authorList>
            <person name="Takahashi-Iniguez T."/>
            <person name="Gonzalez-Noriega A."/>
            <person name="Michalak C."/>
            <person name="Flores M.E."/>
        </authorList>
    </citation>
    <scope>FUNCTION</scope>
    <scope>CATALYTIC ACTIVITY</scope>
    <scope>SUBCELLULAR LOCATION</scope>
    <scope>INTERACTION WITH MMUT</scope>
</reference>
<reference key="9">
    <citation type="journal article" date="2010" name="J. Biol. Chem.">
        <title>Structures of the human GTPase MMAA and vitamin B12-dependent methylmalonyl-CoA mutase and insight into their complex formation.</title>
        <authorList>
            <person name="Froese D.S."/>
            <person name="Kochan G."/>
            <person name="Muniz J.R."/>
            <person name="Wu X."/>
            <person name="Gileadi C."/>
            <person name="Ugochukwu E."/>
            <person name="Krysztofinska E."/>
            <person name="Gravel R.A."/>
            <person name="Oppermann U."/>
            <person name="Yue W.W."/>
        </authorList>
    </citation>
    <scope>X-RAY CRYSTALLOGRAPHY (2.64 ANGSTROMS) OF 72-418 IN COMPLEX WITH GDP</scope>
    <scope>SUBUNIT</scope>
    <scope>BIOPHYSICOCHEMICAL PROPERTIES</scope>
    <scope>INTERACTION WITH MMUT</scope>
    <scope>FUNCTION</scope>
    <scope>CHARACTERIZATION OF VARIANT MACA ARG-188</scope>
    <scope>ACTIVITY REGULATION</scope>
    <scope>CATALYTIC ACTIVITY</scope>
    <scope>GTP-BINDING</scope>
</reference>
<reference key="10">
    <citation type="journal article" date="2004" name="Hum. Mutat.">
        <title>Mutations in the MMAA gene in patients with the cblA disorder of vitamin B(12) metabolism.</title>
        <authorList>
            <person name="Lerner-Ellis J.P."/>
            <person name="Dobson C.M."/>
            <person name="Wai T."/>
            <person name="Watkins D."/>
            <person name="Tirone J.C."/>
            <person name="Leclerc D."/>
            <person name="Dore C."/>
            <person name="Lepage P."/>
            <person name="Gravel R.A."/>
            <person name="Rosenblatt D.S."/>
        </authorList>
    </citation>
    <scope>VARIANTS MACA 22-ARG--ASP-418 DEL; 54-TRP--ASP-418 DEL; PRO-89; 129-TYR--ASP-418 DEL; 145-ARG--ASP-418 DEL; GLN-145; GLU-147; CYS-207; GLU-218; 248-GLN--ASP-418 DEL; 320-TRP--ASP-418 DEL; 330-ARG--ASP-418 DEL AND GLN-359</scope>
    <scope>VARIANT HIS-363</scope>
</reference>
<reference key="11">
    <citation type="journal article" date="2004" name="Mol. Genet. Metab.">
        <title>Mutation analysis of the MMAA and MMAB genes in Japanese patients with vitamin B(12)-responsive methylmalonic acidemia: identification of a prevalent MMAA mutation.</title>
        <authorList>
            <person name="Yang X."/>
            <person name="Sakamoto O."/>
            <person name="Matsubara Y."/>
            <person name="Kure S."/>
            <person name="Suzuki Y."/>
            <person name="Aoki Y."/>
            <person name="Suzuki Y."/>
            <person name="Sakura N."/>
            <person name="Takayanagi M."/>
            <person name="Iinuma K."/>
            <person name="Ohura T."/>
        </authorList>
    </citation>
    <scope>VARIANT MACA GLY-359</scope>
</reference>
<reference key="12">
    <citation type="journal article" date="2008" name="J. Inherit. Metab. Dis.">
        <title>Methylmalonic acidaemia: examination of genotype and biochemical data in 32 patients belonging to mut, cblA or cblB complementation group.</title>
        <authorList>
            <person name="Merinero B."/>
            <person name="Perez B."/>
            <person name="Perez-Cerda C."/>
            <person name="Rincon A."/>
            <person name="Desviat L.R."/>
            <person name="Martinez M.A."/>
            <person name="Sala P.R."/>
            <person name="Garcia M.J."/>
            <person name="Aldamiz-Echevarria L."/>
            <person name="Campos J."/>
            <person name="Cornejo V."/>
            <person name="Del Toro M."/>
            <person name="Mahfoud A."/>
            <person name="Martinez-Pardo M."/>
            <person name="Parini R."/>
            <person name="Pedron C."/>
            <person name="Pena-Quintana L."/>
            <person name="Perez M."/>
            <person name="Pourfarzam M."/>
            <person name="Ugarte M."/>
        </authorList>
    </citation>
    <scope>VARIANTS MACA 22-ARG--ASP-418 DEL; 120-GLN--ASP-418 DEL; 133-GLN--ASP-418 DEL; 145-ARG--ASP-418 DEL AND ARG-188</scope>
</reference>
<reference key="13">
    <citation type="journal article" date="2012" name="Mol. Genet. Metab.">
        <title>High resolution melting analysis of the MMAA gene in patients with cblA and in those with undiagnosed methylmalonic aciduria.</title>
        <authorList>
            <person name="Dempsey-Nunez L."/>
            <person name="Illson M.L."/>
            <person name="Kent J."/>
            <person name="Huang Q."/>
            <person name="Brebner A."/>
            <person name="Watkins D."/>
            <person name="Gilfix B.M."/>
            <person name="Wittwer C.T."/>
            <person name="Rosenblatt D.S."/>
        </authorList>
    </citation>
    <scope>VARIANTS MACA SER-209; LYS-250; ASP-274; SER-274; GLU-276 AND GLN-359</scope>
</reference>
<reference key="14">
    <citation type="journal article" date="2017" name="Hum. Mutat.">
        <title>Protein destabilization and loss of protein-protein interaction are fundamental mechanisms in cblA-type methylmalonic aciduria.</title>
        <authorList>
            <person name="Plessl T."/>
            <person name="Buerer C."/>
            <person name="Lutz S."/>
            <person name="Yue W.W."/>
            <person name="Baumgartner M.R."/>
            <person name="Froese D.S."/>
        </authorList>
    </citation>
    <scope>VARIANTS MACA 24-TYR--ASP-418 DEL; 68-GLN--ASP-418 DEL; PRO-89; 95-GLN--ASP-418 DEL; GLY-98; 100-CYS--ALA-104 DEL; 145-ARG--ASP-418 DEL; GLN-145; GLU-147; ARG-188; ASP-192; 196-ARG--ASP-418 DEL; GLN-196; CYS-207; SER-209; GLU-218; MET-220; PHE-241; ASN-243; 248-GLN--ASP-418 DEL; LYS-250; ASN-258; SER-274; GLU-276; ASP-287; VAL-292; 330-ARG--ASP-418 DEL; 359-ARG--ASP-418 DEL; GLN-359; GLY-359 AND VAL-399</scope>
    <scope>CHARACTERIZATION OF VARIANTS MACA PRO-89; GLY-98; GLN-145; GLU-147; ARG-188; ASP-192; GLN-196; CYS-207; SER-209; GLU-218; MET-220; PHE-241; ASN-243; LYS-250; SER-274; GLU-276; ASP-287; VAL-292; GLN-359; GLY-359 AND VAL-399</scope>
    <scope>FUNCTION</scope>
    <scope>GTP-BINDING</scope>
    <scope>MUTAGENESIS OF LYS-290 AND ASP-292</scope>
    <scope>BIOPHYSICOCHEMICAL PROPERTIES</scope>
    <scope>ACTIVITY REGULATION</scope>
    <scope>CATALYTIC ACTIVITY</scope>
</reference>
<proteinExistence type="evidence at protein level"/>
<protein>
    <recommendedName>
        <fullName evidence="11">Methylmalonic aciduria type A protein, mitochondrial</fullName>
        <ecNumber evidence="6 7 9 10">3.6.-.-</ecNumber>
    </recommendedName>
</protein>
<accession>Q8IVH4</accession>
<accession>B3KX40</accession>
<accession>Q495G7</accession>